<gene>
    <name type="primary">folA</name>
    <name type="synonym">dfrC</name>
    <name type="synonym">folA1</name>
    <name type="ordered locus">SERP1002</name>
</gene>
<name>DYR_STAEQ</name>
<organism>
    <name type="scientific">Staphylococcus epidermidis (strain ATCC 35984 / DSM 28319 / BCRC 17069 / CCUG 31568 / BM 3577 / RP62A)</name>
    <dbReference type="NCBI Taxonomy" id="176279"/>
    <lineage>
        <taxon>Bacteria</taxon>
        <taxon>Bacillati</taxon>
        <taxon>Bacillota</taxon>
        <taxon>Bacilli</taxon>
        <taxon>Bacillales</taxon>
        <taxon>Staphylococcaceae</taxon>
        <taxon>Staphylococcus</taxon>
    </lineage>
</organism>
<protein>
    <recommendedName>
        <fullName>Dihydrofolate reductase</fullName>
        <shortName>DHFR</shortName>
        <ecNumber>1.5.1.3</ecNumber>
    </recommendedName>
</protein>
<dbReference type="EC" id="1.5.1.3"/>
<dbReference type="EMBL" id="CP000029">
    <property type="protein sequence ID" value="AAW54371.1"/>
    <property type="molecule type" value="Genomic_DNA"/>
</dbReference>
<dbReference type="RefSeq" id="WP_001830952.1">
    <property type="nucleotide sequence ID" value="NC_002976.3"/>
</dbReference>
<dbReference type="SMR" id="Q5HPB1"/>
<dbReference type="STRING" id="176279.SERP1002"/>
<dbReference type="GeneID" id="50018758"/>
<dbReference type="KEGG" id="ser:SERP1002"/>
<dbReference type="eggNOG" id="COG0262">
    <property type="taxonomic scope" value="Bacteria"/>
</dbReference>
<dbReference type="HOGENOM" id="CLU_043966_5_1_9"/>
<dbReference type="UniPathway" id="UPA00077">
    <property type="reaction ID" value="UER00158"/>
</dbReference>
<dbReference type="Proteomes" id="UP000000531">
    <property type="component" value="Chromosome"/>
</dbReference>
<dbReference type="GO" id="GO:0005829">
    <property type="term" value="C:cytosol"/>
    <property type="evidence" value="ECO:0007669"/>
    <property type="project" value="TreeGrafter"/>
</dbReference>
<dbReference type="GO" id="GO:0004146">
    <property type="term" value="F:dihydrofolate reductase activity"/>
    <property type="evidence" value="ECO:0007669"/>
    <property type="project" value="UniProtKB-EC"/>
</dbReference>
<dbReference type="GO" id="GO:0050661">
    <property type="term" value="F:NADP binding"/>
    <property type="evidence" value="ECO:0007669"/>
    <property type="project" value="InterPro"/>
</dbReference>
<dbReference type="GO" id="GO:0046452">
    <property type="term" value="P:dihydrofolate metabolic process"/>
    <property type="evidence" value="ECO:0007669"/>
    <property type="project" value="TreeGrafter"/>
</dbReference>
<dbReference type="GO" id="GO:0046655">
    <property type="term" value="P:folic acid metabolic process"/>
    <property type="evidence" value="ECO:0007669"/>
    <property type="project" value="TreeGrafter"/>
</dbReference>
<dbReference type="GO" id="GO:0006730">
    <property type="term" value="P:one-carbon metabolic process"/>
    <property type="evidence" value="ECO:0007669"/>
    <property type="project" value="UniProtKB-KW"/>
</dbReference>
<dbReference type="GO" id="GO:0046654">
    <property type="term" value="P:tetrahydrofolate biosynthetic process"/>
    <property type="evidence" value="ECO:0007669"/>
    <property type="project" value="UniProtKB-UniPathway"/>
</dbReference>
<dbReference type="CDD" id="cd00209">
    <property type="entry name" value="DHFR"/>
    <property type="match status" value="1"/>
</dbReference>
<dbReference type="FunFam" id="3.40.430.10:FF:000001">
    <property type="entry name" value="Dihydrofolate reductase"/>
    <property type="match status" value="1"/>
</dbReference>
<dbReference type="Gene3D" id="3.40.430.10">
    <property type="entry name" value="Dihydrofolate Reductase, subunit A"/>
    <property type="match status" value="1"/>
</dbReference>
<dbReference type="InterPro" id="IPR012259">
    <property type="entry name" value="DHFR"/>
</dbReference>
<dbReference type="InterPro" id="IPR024072">
    <property type="entry name" value="DHFR-like_dom_sf"/>
</dbReference>
<dbReference type="InterPro" id="IPR017925">
    <property type="entry name" value="DHFR_CS"/>
</dbReference>
<dbReference type="InterPro" id="IPR001796">
    <property type="entry name" value="DHFR_dom"/>
</dbReference>
<dbReference type="NCBIfam" id="NF000155">
    <property type="entry name" value="trim_DfrC"/>
    <property type="match status" value="1"/>
</dbReference>
<dbReference type="PANTHER" id="PTHR48069">
    <property type="entry name" value="DIHYDROFOLATE REDUCTASE"/>
    <property type="match status" value="1"/>
</dbReference>
<dbReference type="PANTHER" id="PTHR48069:SF3">
    <property type="entry name" value="DIHYDROFOLATE REDUCTASE"/>
    <property type="match status" value="1"/>
</dbReference>
<dbReference type="Pfam" id="PF00186">
    <property type="entry name" value="DHFR_1"/>
    <property type="match status" value="1"/>
</dbReference>
<dbReference type="PIRSF" id="PIRSF000194">
    <property type="entry name" value="DHFR"/>
    <property type="match status" value="1"/>
</dbReference>
<dbReference type="PRINTS" id="PR00070">
    <property type="entry name" value="DHFR"/>
</dbReference>
<dbReference type="SUPFAM" id="SSF53597">
    <property type="entry name" value="Dihydrofolate reductase-like"/>
    <property type="match status" value="1"/>
</dbReference>
<dbReference type="PROSITE" id="PS00075">
    <property type="entry name" value="DHFR_1"/>
    <property type="match status" value="1"/>
</dbReference>
<dbReference type="PROSITE" id="PS51330">
    <property type="entry name" value="DHFR_2"/>
    <property type="match status" value="1"/>
</dbReference>
<sequence>MTLSIIVAHDKQRVIGYQNQLPWHLPNDLKHVKQLTTGNTLVMGRKTFNSIGKPLPNRRNVVLTNQASFHHEGVDVINSLDEIKELSGHVFIFGGQTLFEAMIDQVDDMYITVIDGKFQGDTFFPPYTFENWEVESSVEGQLDEKNTIPHTFLHLVRRKGK</sequence>
<proteinExistence type="inferred from homology"/>
<comment type="function">
    <text evidence="1">Key enzyme in folate metabolism. Catalyzes an essential reaction for de novo glycine and purine synthesis, and for DNA precursor synthesis (By similarity).</text>
</comment>
<comment type="catalytic activity">
    <reaction evidence="2">
        <text>(6S)-5,6,7,8-tetrahydrofolate + NADP(+) = 7,8-dihydrofolate + NADPH + H(+)</text>
        <dbReference type="Rhea" id="RHEA:15009"/>
        <dbReference type="ChEBI" id="CHEBI:15378"/>
        <dbReference type="ChEBI" id="CHEBI:57451"/>
        <dbReference type="ChEBI" id="CHEBI:57453"/>
        <dbReference type="ChEBI" id="CHEBI:57783"/>
        <dbReference type="ChEBI" id="CHEBI:58349"/>
        <dbReference type="EC" id="1.5.1.3"/>
    </reaction>
</comment>
<comment type="pathway">
    <text>Cofactor biosynthesis; tetrahydrofolate biosynthesis; 5,6,7,8-tetrahydrofolate from 7,8-dihydrofolate: step 1/1.</text>
</comment>
<comment type="similarity">
    <text evidence="3">Belongs to the dihydrofolate reductase family.</text>
</comment>
<reference key="1">
    <citation type="journal article" date="2005" name="J. Bacteriol.">
        <title>Insights on evolution of virulence and resistance from the complete genome analysis of an early methicillin-resistant Staphylococcus aureus strain and a biofilm-producing methicillin-resistant Staphylococcus epidermidis strain.</title>
        <authorList>
            <person name="Gill S.R."/>
            <person name="Fouts D.E."/>
            <person name="Archer G.L."/>
            <person name="Mongodin E.F."/>
            <person name="DeBoy R.T."/>
            <person name="Ravel J."/>
            <person name="Paulsen I.T."/>
            <person name="Kolonay J.F."/>
            <person name="Brinkac L.M."/>
            <person name="Beanan M.J."/>
            <person name="Dodson R.J."/>
            <person name="Daugherty S.C."/>
            <person name="Madupu R."/>
            <person name="Angiuoli S.V."/>
            <person name="Durkin A.S."/>
            <person name="Haft D.H."/>
            <person name="Vamathevan J.J."/>
            <person name="Khouri H."/>
            <person name="Utterback T.R."/>
            <person name="Lee C."/>
            <person name="Dimitrov G."/>
            <person name="Jiang L."/>
            <person name="Qin H."/>
            <person name="Weidman J."/>
            <person name="Tran K."/>
            <person name="Kang K.H."/>
            <person name="Hance I.R."/>
            <person name="Nelson K.E."/>
            <person name="Fraser C.M."/>
        </authorList>
    </citation>
    <scope>NUCLEOTIDE SEQUENCE [LARGE SCALE GENOMIC DNA]</scope>
    <source>
        <strain>ATCC 35984 / DSM 28319 / BCRC 17069 / CCUG 31568 / BM 3577 / RP62A</strain>
    </source>
</reference>
<keyword id="KW-0521">NADP</keyword>
<keyword id="KW-0554">One-carbon metabolism</keyword>
<keyword id="KW-0560">Oxidoreductase</keyword>
<keyword id="KW-1185">Reference proteome</keyword>
<accession>Q5HPB1</accession>
<feature type="chain" id="PRO_0000186415" description="Dihydrofolate reductase">
    <location>
        <begin position="1"/>
        <end position="161"/>
    </location>
</feature>
<feature type="domain" description="DHFR" evidence="2">
    <location>
        <begin position="2"/>
        <end position="157"/>
    </location>
</feature>
<feature type="binding site" evidence="1">
    <location>
        <begin position="6"/>
        <end position="8"/>
    </location>
    <ligand>
        <name>substrate</name>
    </ligand>
</feature>
<feature type="binding site" evidence="1">
    <location>
        <begin position="7"/>
        <end position="8"/>
    </location>
    <ligand>
        <name>NADP(+)</name>
        <dbReference type="ChEBI" id="CHEBI:58349"/>
    </ligand>
</feature>
<feature type="binding site" evidence="1">
    <location>
        <begin position="15"/>
        <end position="20"/>
    </location>
    <ligand>
        <name>NADP(+)</name>
        <dbReference type="ChEBI" id="CHEBI:58349"/>
    </ligand>
</feature>
<feature type="binding site" evidence="1">
    <location>
        <position position="28"/>
    </location>
    <ligand>
        <name>substrate</name>
    </ligand>
</feature>
<feature type="binding site" evidence="1">
    <location>
        <begin position="44"/>
        <end position="47"/>
    </location>
    <ligand>
        <name>NADP(+)</name>
        <dbReference type="ChEBI" id="CHEBI:58349"/>
    </ligand>
</feature>
<feature type="binding site" evidence="1">
    <location>
        <position position="58"/>
    </location>
    <ligand>
        <name>substrate</name>
    </ligand>
</feature>
<feature type="binding site" evidence="1">
    <location>
        <begin position="63"/>
        <end position="66"/>
    </location>
    <ligand>
        <name>NADP(+)</name>
        <dbReference type="ChEBI" id="CHEBI:58349"/>
    </ligand>
</feature>
<feature type="binding site" evidence="1">
    <location>
        <begin position="93"/>
        <end position="98"/>
    </location>
    <ligand>
        <name>NADP(+)</name>
        <dbReference type="ChEBI" id="CHEBI:58349"/>
    </ligand>
</feature>
<feature type="binding site" evidence="1">
    <location>
        <position position="112"/>
    </location>
    <ligand>
        <name>substrate</name>
    </ligand>
</feature>
<evidence type="ECO:0000250" key="1"/>
<evidence type="ECO:0000255" key="2">
    <source>
        <dbReference type="PROSITE-ProRule" id="PRU00660"/>
    </source>
</evidence>
<evidence type="ECO:0000305" key="3"/>